<sequence length="402" mass="45369">MASIIARVGNSRRLNAPLPPWAHSMLRSLGRSLGPIMASMADRNMKLFSGRVVPAQGEETFENWLTQVNGVLPDWNMSEEEKLKRLMKTLRGPAREVMRVLQATNPNLSVADFLRAMKLVFGESESSVTAHGKFFNTLQAQGEKASLYVIRLEVQLQNAIQAGIIAEKDANRTRLQQLLLGGELSRDLRLRLKDFLRMYANEQERLPNFLELIRMVREEEDWDDAFIKRKRPKRSESMVERAVSPVAFQGSPPIVIGSADCNVIEIDDTLDDSDEDVILVESQDPPLPSWGAPPLRDRARPQDEVLVIDSPHNSRAQFPSTSGGSGYKNNGPGEMRRARKRKHTIRCSYCGEEGHSKETCDNESDKAQVFENLIITLQELTHTEMERSRVAPGEYNDFSEPL</sequence>
<feature type="chain" id="PRO_0000150971" description="Zinc finger CCHC domain-containing protein 12">
    <location>
        <begin position="1"/>
        <end position="402"/>
    </location>
</feature>
<feature type="zinc finger region" description="CCHC-type">
    <location>
        <begin position="345"/>
        <end position="362"/>
    </location>
</feature>
<feature type="region of interest" description="Disordered" evidence="2">
    <location>
        <begin position="308"/>
        <end position="341"/>
    </location>
</feature>
<feature type="compositionally biased region" description="Polar residues" evidence="2">
    <location>
        <begin position="311"/>
        <end position="322"/>
    </location>
</feature>
<feature type="sequence variant" id="VAR_045908" description="In dbSNP:rs35356061.">
    <original>R</original>
    <variation>C</variation>
    <location>
        <position position="7"/>
    </location>
</feature>
<feature type="sequence variant" id="VAR_045909" description="In dbSNP:rs17854957." evidence="3">
    <original>L</original>
    <variation>I</variation>
    <location>
        <position position="179"/>
    </location>
</feature>
<feature type="sequence variant" id="VAR_045910" description="In dbSNP:rs17853670." evidence="3">
    <original>R</original>
    <variation>G</variation>
    <location>
        <position position="214"/>
    </location>
</feature>
<feature type="sequence variant" id="VAR_075208" description="In dbSNP:rs140976011." evidence="4">
    <original>R</original>
    <variation>T</variation>
    <location>
        <position position="241"/>
    </location>
</feature>
<evidence type="ECO:0000250" key="1"/>
<evidence type="ECO:0000256" key="2">
    <source>
        <dbReference type="SAM" id="MobiDB-lite"/>
    </source>
</evidence>
<evidence type="ECO:0000269" key="3">
    <source>
    </source>
</evidence>
<evidence type="ECO:0000269" key="4">
    <source>
    </source>
</evidence>
<evidence type="ECO:0000305" key="5"/>
<comment type="function">
    <text evidence="1">Transcriptional coactivator in the bone morphogenetic protein (BMP)-signaling pathway. It positively modulates BMP signaling by interacting with SMAD1 and associating with CBP in the transcription complex. It contributes to the BMP-induced enhancement of cholinergic-neuron-specific gene expression (By similarity).</text>
</comment>
<comment type="subunit">
    <text evidence="1">Interacts with SMAD1 and CREB-binding protein (CBP). Forms a protein-DNA complex through its association with SMAD1 (By similarity).</text>
</comment>
<comment type="interaction">
    <interactant intactId="EBI-748373">
        <id>Q6PEW1</id>
    </interactant>
    <interactant intactId="EBI-2813554">
        <id>Q8WTS1</id>
        <label>ABHD5</label>
    </interactant>
    <organismsDiffer>false</organismsDiffer>
    <experiments>3</experiments>
</comment>
<comment type="interaction">
    <interactant intactId="EBI-748373">
        <id>Q6PEW1</id>
    </interactant>
    <interactant intactId="EBI-721179">
        <id>P27449</id>
        <label>ATP6V0C</label>
    </interactant>
    <organismsDiffer>false</organismsDiffer>
    <experiments>3</experiments>
</comment>
<comment type="interaction">
    <interactant intactId="EBI-748373">
        <id>Q6PEW1</id>
    </interactant>
    <interactant intactId="EBI-2873235">
        <id>Q9UJ71</id>
        <label>CD207</label>
    </interactant>
    <organismsDiffer>false</organismsDiffer>
    <experiments>3</experiments>
</comment>
<comment type="interaction">
    <interactant intactId="EBI-748373">
        <id>Q6PEW1</id>
    </interactant>
    <interactant intactId="EBI-494804">
        <id>Q13158</id>
        <label>FADD</label>
    </interactant>
    <organismsDiffer>false</organismsDiffer>
    <experiments>3</experiments>
</comment>
<comment type="interaction">
    <interactant intactId="EBI-748373">
        <id>Q6PEW1</id>
    </interactant>
    <interactant intactId="EBI-743099">
        <id>Q969F0</id>
        <label>FATE1</label>
    </interactant>
    <organismsDiffer>false</organismsDiffer>
    <experiments>3</experiments>
</comment>
<comment type="interaction">
    <interactant intactId="EBI-748373">
        <id>Q6PEW1</id>
    </interactant>
    <interactant intactId="EBI-466029">
        <id>P42858</id>
        <label>HTT</label>
    </interactant>
    <organismsDiffer>false</organismsDiffer>
    <experiments>3</experiments>
</comment>
<comment type="interaction">
    <interactant intactId="EBI-748373">
        <id>Q6PEW1</id>
    </interactant>
    <interactant intactId="EBI-358297">
        <id>O00505</id>
        <label>KPNA3</label>
    </interactant>
    <organismsDiffer>false</organismsDiffer>
    <experiments>3</experiments>
</comment>
<comment type="interaction">
    <interactant intactId="EBI-748373">
        <id>Q6PEW1</id>
    </interactant>
    <interactant intactId="EBI-8639312">
        <id>P25800</id>
        <label>LMO1</label>
    </interactant>
    <organismsDiffer>false</organismsDiffer>
    <experiments>3</experiments>
</comment>
<comment type="interaction">
    <interactant intactId="EBI-748373">
        <id>Q6PEW1</id>
    </interactant>
    <interactant intactId="EBI-11525615">
        <id>G5E962</id>
        <label>MAGEA11</label>
    </interactant>
    <organismsDiffer>false</organismsDiffer>
    <experiments>3</experiments>
</comment>
<comment type="interaction">
    <interactant intactId="EBI-748373">
        <id>Q6PEW1</id>
    </interactant>
    <interactant intactId="EBI-10178634">
        <id>P43364-2</id>
        <label>MAGEA11</label>
    </interactant>
    <organismsDiffer>false</organismsDiffer>
    <experiments>3</experiments>
</comment>
<comment type="interaction">
    <interactant intactId="EBI-748373">
        <id>Q6PEW1</id>
    </interactant>
    <interactant intactId="EBI-348259">
        <id>Q96EZ8</id>
        <label>MCRS1</label>
    </interactant>
    <organismsDiffer>false</organismsDiffer>
    <experiments>3</experiments>
</comment>
<comment type="interaction">
    <interactant intactId="EBI-748373">
        <id>Q6PEW1</id>
    </interactant>
    <interactant intactId="EBI-21572584">
        <id>P07205</id>
        <label>PGK2</label>
    </interactant>
    <organismsDiffer>false</organismsDiffer>
    <experiments>2</experiments>
</comment>
<comment type="interaction">
    <interactant intactId="EBI-748373">
        <id>Q6PEW1</id>
    </interactant>
    <interactant intactId="EBI-302345">
        <id>Q8ND90</id>
        <label>PNMA1</label>
    </interactant>
    <organismsDiffer>false</organismsDiffer>
    <experiments>12</experiments>
</comment>
<comment type="interaction">
    <interactant intactId="EBI-748373">
        <id>Q6PEW1</id>
    </interactant>
    <interactant intactId="EBI-744408">
        <id>O75150</id>
        <label>RNF40</label>
    </interactant>
    <organismsDiffer>false</organismsDiffer>
    <experiments>3</experiments>
</comment>
<comment type="interaction">
    <interactant intactId="EBI-748373">
        <id>Q6PEW1</id>
    </interactant>
    <interactant intactId="EBI-8636004">
        <id>Q96GQ5</id>
        <label>RUSF1</label>
    </interactant>
    <organismsDiffer>false</organismsDiffer>
    <experiments>3</experiments>
</comment>
<comment type="interaction">
    <interactant intactId="EBI-748373">
        <id>Q6PEW1</id>
    </interactant>
    <interactant intactId="EBI-11956649">
        <id>P32856-2</id>
        <label>STX2</label>
    </interactant>
    <organismsDiffer>false</organismsDiffer>
    <experiments>3</experiments>
</comment>
<comment type="interaction">
    <interactant intactId="EBI-748373">
        <id>Q6PEW1</id>
    </interactant>
    <interactant intactId="EBI-80140">
        <id>P63165</id>
        <label>SUMO1</label>
    </interactant>
    <organismsDiffer>false</organismsDiffer>
    <experiments>6</experiments>
</comment>
<comment type="interaction">
    <interactant intactId="EBI-748373">
        <id>Q6PEW1</id>
    </interactant>
    <interactant intactId="EBI-474067">
        <id>P55854</id>
        <label>SUMO3</label>
    </interactant>
    <organismsDiffer>false</organismsDiffer>
    <experiments>4</experiments>
</comment>
<comment type="interaction">
    <interactant intactId="EBI-748373">
        <id>Q6PEW1</id>
    </interactant>
    <interactant intactId="EBI-742268">
        <id>O75478</id>
        <label>TADA2A</label>
    </interactant>
    <organismsDiffer>false</organismsDiffer>
    <experiments>3</experiments>
</comment>
<comment type="interaction">
    <interactant intactId="EBI-748373">
        <id>Q6PEW1</id>
    </interactant>
    <interactant intactId="EBI-717422">
        <id>Q12800</id>
        <label>TFCP2</label>
    </interactant>
    <organismsDiffer>false</organismsDiffer>
    <experiments>6</experiments>
</comment>
<comment type="interaction">
    <interactant intactId="EBI-748373">
        <id>Q6PEW1</id>
    </interactant>
    <interactant intactId="EBI-721293">
        <id>Q9BTV4</id>
        <label>TMEM43</label>
    </interactant>
    <organismsDiffer>false</organismsDiffer>
    <experiments>3</experiments>
</comment>
<comment type="interaction">
    <interactant intactId="EBI-748373">
        <id>Q6PEW1</id>
    </interactant>
    <interactant intactId="EBI-8649725">
        <id>Q9BSE2</id>
        <label>TMEM79</label>
    </interactant>
    <organismsDiffer>false</organismsDiffer>
    <experiments>3</experiments>
</comment>
<comment type="interaction">
    <interactant intactId="EBI-748373">
        <id>Q6PEW1</id>
    </interactant>
    <interactant intactId="EBI-359977">
        <id>P01375</id>
        <label>TNF</label>
    </interactant>
    <organismsDiffer>false</organismsDiffer>
    <experiments>3</experiments>
</comment>
<comment type="interaction">
    <interactant intactId="EBI-748373">
        <id>Q6PEW1</id>
    </interactant>
    <interactant intactId="EBI-10180829">
        <id>Q7KZS0</id>
        <label>UBE2I</label>
    </interactant>
    <organismsDiffer>false</organismsDiffer>
    <experiments>3</experiments>
</comment>
<comment type="similarity">
    <text evidence="5">Belongs to the ZCCHC12 family.</text>
</comment>
<gene>
    <name type="primary">ZCCHC12</name>
    <name type="synonym">SIZN1</name>
</gene>
<proteinExistence type="evidence at protein level"/>
<keyword id="KW-0479">Metal-binding</keyword>
<keyword id="KW-1267">Proteomics identification</keyword>
<keyword id="KW-1185">Reference proteome</keyword>
<keyword id="KW-0804">Transcription</keyword>
<keyword id="KW-0805">Transcription regulation</keyword>
<keyword id="KW-0862">Zinc</keyword>
<keyword id="KW-0863">Zinc-finger</keyword>
<reference key="1">
    <citation type="journal article" date="2004" name="Nat. Genet.">
        <title>Complete sequencing and characterization of 21,243 full-length human cDNAs.</title>
        <authorList>
            <person name="Ota T."/>
            <person name="Suzuki Y."/>
            <person name="Nishikawa T."/>
            <person name="Otsuki T."/>
            <person name="Sugiyama T."/>
            <person name="Irie R."/>
            <person name="Wakamatsu A."/>
            <person name="Hayashi K."/>
            <person name="Sato H."/>
            <person name="Nagai K."/>
            <person name="Kimura K."/>
            <person name="Makita H."/>
            <person name="Sekine M."/>
            <person name="Obayashi M."/>
            <person name="Nishi T."/>
            <person name="Shibahara T."/>
            <person name="Tanaka T."/>
            <person name="Ishii S."/>
            <person name="Yamamoto J."/>
            <person name="Saito K."/>
            <person name="Kawai Y."/>
            <person name="Isono Y."/>
            <person name="Nakamura Y."/>
            <person name="Nagahari K."/>
            <person name="Murakami K."/>
            <person name="Yasuda T."/>
            <person name="Iwayanagi T."/>
            <person name="Wagatsuma M."/>
            <person name="Shiratori A."/>
            <person name="Sudo H."/>
            <person name="Hosoiri T."/>
            <person name="Kaku Y."/>
            <person name="Kodaira H."/>
            <person name="Kondo H."/>
            <person name="Sugawara M."/>
            <person name="Takahashi M."/>
            <person name="Kanda K."/>
            <person name="Yokoi T."/>
            <person name="Furuya T."/>
            <person name="Kikkawa E."/>
            <person name="Omura Y."/>
            <person name="Abe K."/>
            <person name="Kamihara K."/>
            <person name="Katsuta N."/>
            <person name="Sato K."/>
            <person name="Tanikawa M."/>
            <person name="Yamazaki M."/>
            <person name="Ninomiya K."/>
            <person name="Ishibashi T."/>
            <person name="Yamashita H."/>
            <person name="Murakawa K."/>
            <person name="Fujimori K."/>
            <person name="Tanai H."/>
            <person name="Kimata M."/>
            <person name="Watanabe M."/>
            <person name="Hiraoka S."/>
            <person name="Chiba Y."/>
            <person name="Ishida S."/>
            <person name="Ono Y."/>
            <person name="Takiguchi S."/>
            <person name="Watanabe S."/>
            <person name="Yosida M."/>
            <person name="Hotuta T."/>
            <person name="Kusano J."/>
            <person name="Kanehori K."/>
            <person name="Takahashi-Fujii A."/>
            <person name="Hara H."/>
            <person name="Tanase T.-O."/>
            <person name="Nomura Y."/>
            <person name="Togiya S."/>
            <person name="Komai F."/>
            <person name="Hara R."/>
            <person name="Takeuchi K."/>
            <person name="Arita M."/>
            <person name="Imose N."/>
            <person name="Musashino K."/>
            <person name="Yuuki H."/>
            <person name="Oshima A."/>
            <person name="Sasaki N."/>
            <person name="Aotsuka S."/>
            <person name="Yoshikawa Y."/>
            <person name="Matsunawa H."/>
            <person name="Ichihara T."/>
            <person name="Shiohata N."/>
            <person name="Sano S."/>
            <person name="Moriya S."/>
            <person name="Momiyama H."/>
            <person name="Satoh N."/>
            <person name="Takami S."/>
            <person name="Terashima Y."/>
            <person name="Suzuki O."/>
            <person name="Nakagawa S."/>
            <person name="Senoh A."/>
            <person name="Mizoguchi H."/>
            <person name="Goto Y."/>
            <person name="Shimizu F."/>
            <person name="Wakebe H."/>
            <person name="Hishigaki H."/>
            <person name="Watanabe T."/>
            <person name="Sugiyama A."/>
            <person name="Takemoto M."/>
            <person name="Kawakami B."/>
            <person name="Yamazaki M."/>
            <person name="Watanabe K."/>
            <person name="Kumagai A."/>
            <person name="Itakura S."/>
            <person name="Fukuzumi Y."/>
            <person name="Fujimori Y."/>
            <person name="Komiyama M."/>
            <person name="Tashiro H."/>
            <person name="Tanigami A."/>
            <person name="Fujiwara T."/>
            <person name="Ono T."/>
            <person name="Yamada K."/>
            <person name="Fujii Y."/>
            <person name="Ozaki K."/>
            <person name="Hirao M."/>
            <person name="Ohmori Y."/>
            <person name="Kawabata A."/>
            <person name="Hikiji T."/>
            <person name="Kobatake N."/>
            <person name="Inagaki H."/>
            <person name="Ikema Y."/>
            <person name="Okamoto S."/>
            <person name="Okitani R."/>
            <person name="Kawakami T."/>
            <person name="Noguchi S."/>
            <person name="Itoh T."/>
            <person name="Shigeta K."/>
            <person name="Senba T."/>
            <person name="Matsumura K."/>
            <person name="Nakajima Y."/>
            <person name="Mizuno T."/>
            <person name="Morinaga M."/>
            <person name="Sasaki M."/>
            <person name="Togashi T."/>
            <person name="Oyama M."/>
            <person name="Hata H."/>
            <person name="Watanabe M."/>
            <person name="Komatsu T."/>
            <person name="Mizushima-Sugano J."/>
            <person name="Satoh T."/>
            <person name="Shirai Y."/>
            <person name="Takahashi Y."/>
            <person name="Nakagawa K."/>
            <person name="Okumura K."/>
            <person name="Nagase T."/>
            <person name="Nomura N."/>
            <person name="Kikuchi H."/>
            <person name="Masuho Y."/>
            <person name="Yamashita R."/>
            <person name="Nakai K."/>
            <person name="Yada T."/>
            <person name="Nakamura Y."/>
            <person name="Ohara O."/>
            <person name="Isogai T."/>
            <person name="Sugano S."/>
        </authorList>
    </citation>
    <scope>NUCLEOTIDE SEQUENCE [LARGE SCALE MRNA]</scope>
    <source>
        <tissue>Cerebellum</tissue>
    </source>
</reference>
<reference key="2">
    <citation type="submission" date="2005-09" db="EMBL/GenBank/DDBJ databases">
        <authorList>
            <person name="Mural R.J."/>
            <person name="Istrail S."/>
            <person name="Sutton G.G."/>
            <person name="Florea L."/>
            <person name="Halpern A.L."/>
            <person name="Mobarry C.M."/>
            <person name="Lippert R."/>
            <person name="Walenz B."/>
            <person name="Shatkay H."/>
            <person name="Dew I."/>
            <person name="Miller J.R."/>
            <person name="Flanigan M.J."/>
            <person name="Edwards N.J."/>
            <person name="Bolanos R."/>
            <person name="Fasulo D."/>
            <person name="Halldorsson B.V."/>
            <person name="Hannenhalli S."/>
            <person name="Turner R."/>
            <person name="Yooseph S."/>
            <person name="Lu F."/>
            <person name="Nusskern D.R."/>
            <person name="Shue B.C."/>
            <person name="Zheng X.H."/>
            <person name="Zhong F."/>
            <person name="Delcher A.L."/>
            <person name="Huson D.H."/>
            <person name="Kravitz S.A."/>
            <person name="Mouchard L."/>
            <person name="Reinert K."/>
            <person name="Remington K.A."/>
            <person name="Clark A.G."/>
            <person name="Waterman M.S."/>
            <person name="Eichler E.E."/>
            <person name="Adams M.D."/>
            <person name="Hunkapiller M.W."/>
            <person name="Myers E.W."/>
            <person name="Venter J.C."/>
        </authorList>
    </citation>
    <scope>NUCLEOTIDE SEQUENCE [LARGE SCALE GENOMIC DNA]</scope>
</reference>
<reference key="3">
    <citation type="journal article" date="2004" name="Genome Res.">
        <title>The status, quality, and expansion of the NIH full-length cDNA project: the Mammalian Gene Collection (MGC).</title>
        <authorList>
            <consortium name="The MGC Project Team"/>
        </authorList>
    </citation>
    <scope>NUCLEOTIDE SEQUENCE [LARGE SCALE MRNA]</scope>
    <scope>VARIANTS ILE-179 AND GLY-214</scope>
    <source>
        <tissue>Brain</tissue>
    </source>
</reference>
<reference key="4">
    <citation type="journal article" date="2015" name="Sci. Rep.">
        <title>NAA10 mutation causing a novel intellectual disability syndrome with Long QT due to N-terminal acetyltransferase impairment.</title>
        <authorList>
            <person name="Casey J.P."/>
            <person name="Stoeve S.I."/>
            <person name="McGorrian C."/>
            <person name="Galvin J."/>
            <person name="Blenski M."/>
            <person name="Dunne A."/>
            <person name="Ennis S."/>
            <person name="Brett F."/>
            <person name="King M.D."/>
            <person name="Arnesen T."/>
            <person name="Lynch S.A."/>
        </authorList>
    </citation>
    <scope>VARIANT THR-241</scope>
</reference>
<accession>Q6PEW1</accession>
<accession>B3KV48</accession>
<accession>Q6PID5</accession>
<accession>Q8N1C1</accession>
<dbReference type="EMBL" id="AK122676">
    <property type="protein sequence ID" value="BAG53660.1"/>
    <property type="molecule type" value="mRNA"/>
</dbReference>
<dbReference type="EMBL" id="CH471161">
    <property type="protein sequence ID" value="EAW89892.1"/>
    <property type="molecule type" value="Genomic_DNA"/>
</dbReference>
<dbReference type="EMBL" id="BC031241">
    <property type="protein sequence ID" value="AAH31241.1"/>
    <property type="molecule type" value="mRNA"/>
</dbReference>
<dbReference type="EMBL" id="BC036572">
    <property type="protein sequence ID" value="AAH36572.1"/>
    <property type="molecule type" value="mRNA"/>
</dbReference>
<dbReference type="EMBL" id="BC057841">
    <property type="protein sequence ID" value="AAH57841.1"/>
    <property type="molecule type" value="mRNA"/>
</dbReference>
<dbReference type="CCDS" id="CCDS14574.1"/>
<dbReference type="RefSeq" id="NP_001299820.1">
    <property type="nucleotide sequence ID" value="NM_001312891.2"/>
</dbReference>
<dbReference type="RefSeq" id="NP_776159.1">
    <property type="nucleotide sequence ID" value="NM_173798.4"/>
</dbReference>
<dbReference type="SMR" id="Q6PEW1"/>
<dbReference type="BioGRID" id="127997">
    <property type="interactions" value="34"/>
</dbReference>
<dbReference type="FunCoup" id="Q6PEW1">
    <property type="interactions" value="367"/>
</dbReference>
<dbReference type="IntAct" id="Q6PEW1">
    <property type="interactions" value="30"/>
</dbReference>
<dbReference type="STRING" id="9606.ENSP00000308921"/>
<dbReference type="iPTMnet" id="Q6PEW1"/>
<dbReference type="PhosphoSitePlus" id="Q6PEW1"/>
<dbReference type="BioMuta" id="ZCCHC12"/>
<dbReference type="DMDM" id="85718626"/>
<dbReference type="jPOST" id="Q6PEW1"/>
<dbReference type="MassIVE" id="Q6PEW1"/>
<dbReference type="PaxDb" id="9606-ENSP00000308921"/>
<dbReference type="PeptideAtlas" id="Q6PEW1"/>
<dbReference type="ProteomicsDB" id="67083"/>
<dbReference type="Antibodypedia" id="29736">
    <property type="antibodies" value="109 antibodies from 19 providers"/>
</dbReference>
<dbReference type="DNASU" id="170261"/>
<dbReference type="Ensembl" id="ENST00000310164.3">
    <property type="protein sequence ID" value="ENSP00000308921.2"/>
    <property type="gene ID" value="ENSG00000174460.4"/>
</dbReference>
<dbReference type="GeneID" id="170261"/>
<dbReference type="KEGG" id="hsa:170261"/>
<dbReference type="MANE-Select" id="ENST00000310164.3">
    <property type="protein sequence ID" value="ENSP00000308921.2"/>
    <property type="RefSeq nucleotide sequence ID" value="NM_173798.4"/>
    <property type="RefSeq protein sequence ID" value="NP_776159.1"/>
</dbReference>
<dbReference type="UCSC" id="uc004equ.4">
    <property type="organism name" value="human"/>
</dbReference>
<dbReference type="AGR" id="HGNC:27273"/>
<dbReference type="CTD" id="170261"/>
<dbReference type="DisGeNET" id="170261"/>
<dbReference type="GeneCards" id="ZCCHC12"/>
<dbReference type="HGNC" id="HGNC:27273">
    <property type="gene designation" value="ZCCHC12"/>
</dbReference>
<dbReference type="HPA" id="ENSG00000174460">
    <property type="expression patterns" value="Group enriched (brain, endometrium, fallopian tube, smooth muscle)"/>
</dbReference>
<dbReference type="MalaCards" id="ZCCHC12"/>
<dbReference type="MIM" id="300701">
    <property type="type" value="gene"/>
</dbReference>
<dbReference type="neXtProt" id="NX_Q6PEW1"/>
<dbReference type="OpenTargets" id="ENSG00000174460"/>
<dbReference type="PharmGKB" id="PA134885304"/>
<dbReference type="VEuPathDB" id="HostDB:ENSG00000174460"/>
<dbReference type="eggNOG" id="ENOG502RU0T">
    <property type="taxonomic scope" value="Eukaryota"/>
</dbReference>
<dbReference type="GeneTree" id="ENSGT01030000234522"/>
<dbReference type="HOGENOM" id="CLU_686127_0_0_1"/>
<dbReference type="InParanoid" id="Q6PEW1"/>
<dbReference type="OMA" id="RKHTIRC"/>
<dbReference type="OrthoDB" id="115435at2759"/>
<dbReference type="PAN-GO" id="Q6PEW1">
    <property type="GO annotations" value="1 GO annotation based on evolutionary models"/>
</dbReference>
<dbReference type="PhylomeDB" id="Q6PEW1"/>
<dbReference type="TreeFam" id="TF335054"/>
<dbReference type="PathwayCommons" id="Q6PEW1"/>
<dbReference type="SignaLink" id="Q6PEW1"/>
<dbReference type="BioGRID-ORCS" id="170261">
    <property type="hits" value="7 hits in 764 CRISPR screens"/>
</dbReference>
<dbReference type="CD-CODE" id="B5B9A610">
    <property type="entry name" value="PML body"/>
</dbReference>
<dbReference type="GenomeRNAi" id="170261"/>
<dbReference type="Pharos" id="Q6PEW1">
    <property type="development level" value="Tbio"/>
</dbReference>
<dbReference type="PRO" id="PR:Q6PEW1"/>
<dbReference type="Proteomes" id="UP000005640">
    <property type="component" value="Chromosome X"/>
</dbReference>
<dbReference type="RNAct" id="Q6PEW1">
    <property type="molecule type" value="protein"/>
</dbReference>
<dbReference type="Bgee" id="ENSG00000174460">
    <property type="expression patterns" value="Expressed in left uterine tube and 124 other cell types or tissues"/>
</dbReference>
<dbReference type="GO" id="GO:0005634">
    <property type="term" value="C:nucleus"/>
    <property type="evidence" value="ECO:0000318"/>
    <property type="project" value="GO_Central"/>
</dbReference>
<dbReference type="GO" id="GO:0003676">
    <property type="term" value="F:nucleic acid binding"/>
    <property type="evidence" value="ECO:0007669"/>
    <property type="project" value="InterPro"/>
</dbReference>
<dbReference type="GO" id="GO:0008270">
    <property type="term" value="F:zinc ion binding"/>
    <property type="evidence" value="ECO:0007669"/>
    <property type="project" value="UniProtKB-KW"/>
</dbReference>
<dbReference type="InterPro" id="IPR026523">
    <property type="entry name" value="PNMA"/>
</dbReference>
<dbReference type="InterPro" id="IPR048270">
    <property type="entry name" value="PNMA_C"/>
</dbReference>
<dbReference type="InterPro" id="IPR036875">
    <property type="entry name" value="Znf_CCHC_sf"/>
</dbReference>
<dbReference type="PANTHER" id="PTHR23095">
    <property type="entry name" value="PARANEOPLASTIC ANTIGEN"/>
    <property type="match status" value="1"/>
</dbReference>
<dbReference type="PANTHER" id="PTHR23095:SF18">
    <property type="entry name" value="ZINC FINGER CCHC DOMAIN-CONTAINING PROTEIN 12"/>
    <property type="match status" value="1"/>
</dbReference>
<dbReference type="Pfam" id="PF14893">
    <property type="entry name" value="PNMA"/>
    <property type="match status" value="1"/>
</dbReference>
<dbReference type="SUPFAM" id="SSF57756">
    <property type="entry name" value="Retrovirus zinc finger-like domains"/>
    <property type="match status" value="1"/>
</dbReference>
<name>ZCH12_HUMAN</name>
<organism>
    <name type="scientific">Homo sapiens</name>
    <name type="common">Human</name>
    <dbReference type="NCBI Taxonomy" id="9606"/>
    <lineage>
        <taxon>Eukaryota</taxon>
        <taxon>Metazoa</taxon>
        <taxon>Chordata</taxon>
        <taxon>Craniata</taxon>
        <taxon>Vertebrata</taxon>
        <taxon>Euteleostomi</taxon>
        <taxon>Mammalia</taxon>
        <taxon>Eutheria</taxon>
        <taxon>Euarchontoglires</taxon>
        <taxon>Primates</taxon>
        <taxon>Haplorrhini</taxon>
        <taxon>Catarrhini</taxon>
        <taxon>Hominidae</taxon>
        <taxon>Homo</taxon>
    </lineage>
</organism>
<protein>
    <recommendedName>
        <fullName>Zinc finger CCHC domain-containing protein 12</fullName>
    </recommendedName>
    <alternativeName>
        <fullName>Smad-interacting zinc finger protein 1</fullName>
    </alternativeName>
</protein>